<proteinExistence type="inferred from homology"/>
<evidence type="ECO:0000255" key="1">
    <source>
        <dbReference type="HAMAP-Rule" id="MF_00394"/>
    </source>
</evidence>
<comment type="function">
    <text evidence="1">Catalyzes the reduction of the glycolytic intermediate dihydroxyacetone phosphate (DHAP) to sn-glycerol 3-phosphate (G3P), the key precursor for phospholipid synthesis.</text>
</comment>
<comment type="catalytic activity">
    <reaction evidence="1">
        <text>sn-glycerol 3-phosphate + NAD(+) = dihydroxyacetone phosphate + NADH + H(+)</text>
        <dbReference type="Rhea" id="RHEA:11092"/>
        <dbReference type="ChEBI" id="CHEBI:15378"/>
        <dbReference type="ChEBI" id="CHEBI:57540"/>
        <dbReference type="ChEBI" id="CHEBI:57597"/>
        <dbReference type="ChEBI" id="CHEBI:57642"/>
        <dbReference type="ChEBI" id="CHEBI:57945"/>
        <dbReference type="EC" id="1.1.1.94"/>
    </reaction>
    <physiologicalReaction direction="right-to-left" evidence="1">
        <dbReference type="Rhea" id="RHEA:11094"/>
    </physiologicalReaction>
</comment>
<comment type="catalytic activity">
    <reaction evidence="1">
        <text>sn-glycerol 3-phosphate + NADP(+) = dihydroxyacetone phosphate + NADPH + H(+)</text>
        <dbReference type="Rhea" id="RHEA:11096"/>
        <dbReference type="ChEBI" id="CHEBI:15378"/>
        <dbReference type="ChEBI" id="CHEBI:57597"/>
        <dbReference type="ChEBI" id="CHEBI:57642"/>
        <dbReference type="ChEBI" id="CHEBI:57783"/>
        <dbReference type="ChEBI" id="CHEBI:58349"/>
        <dbReference type="EC" id="1.1.1.94"/>
    </reaction>
    <physiologicalReaction direction="right-to-left" evidence="1">
        <dbReference type="Rhea" id="RHEA:11098"/>
    </physiologicalReaction>
</comment>
<comment type="pathway">
    <text evidence="1">Membrane lipid metabolism; glycerophospholipid metabolism.</text>
</comment>
<comment type="subcellular location">
    <subcellularLocation>
        <location evidence="1">Cytoplasm</location>
    </subcellularLocation>
</comment>
<comment type="similarity">
    <text evidence="1">Belongs to the NAD-dependent glycerol-3-phosphate dehydrogenase family.</text>
</comment>
<name>GPDA_PARP8</name>
<accession>B2JC99</accession>
<sequence length="332" mass="34423">MKVAVLGAGAWGTALAGHLAARHDTVLWARDATLISELSTSHENARYLAGVALPSTLRFQANLELALNHALDDAALCVVATPVAGLRAMLRTMRDMRKVPSHIVWLCKGFEADSQLMPHQVVAQELSGHTSNGPLSGPSFAREVGQGLPVALTVASASAACRERTVAAFHHGAMRIYSGDDVVGVEVGGAVKNVLAIATGIADGLGLGLNARAALITRGLAEMSRLGAALGGRAETFTGLTGLGDLILTATGDLSRNRTVGMQLASGRSLDDILNALGHVAEGVRCARSVLSLAQSHAIDMPITQAVCDVLFNGVAPRDAVSALLRRDAKPE</sequence>
<keyword id="KW-0963">Cytoplasm</keyword>
<keyword id="KW-0444">Lipid biosynthesis</keyword>
<keyword id="KW-0443">Lipid metabolism</keyword>
<keyword id="KW-0520">NAD</keyword>
<keyword id="KW-0521">NADP</keyword>
<keyword id="KW-0547">Nucleotide-binding</keyword>
<keyword id="KW-0560">Oxidoreductase</keyword>
<keyword id="KW-0594">Phospholipid biosynthesis</keyword>
<keyword id="KW-1208">Phospholipid metabolism</keyword>
<keyword id="KW-1185">Reference proteome</keyword>
<dbReference type="EC" id="1.1.1.94" evidence="1"/>
<dbReference type="EMBL" id="CP001043">
    <property type="protein sequence ID" value="ACC69463.1"/>
    <property type="molecule type" value="Genomic_DNA"/>
</dbReference>
<dbReference type="RefSeq" id="WP_012399690.1">
    <property type="nucleotide sequence ID" value="NC_010622.1"/>
</dbReference>
<dbReference type="SMR" id="B2JC99"/>
<dbReference type="STRING" id="391038.Bphy_0270"/>
<dbReference type="KEGG" id="bph:Bphy_0270"/>
<dbReference type="eggNOG" id="COG0240">
    <property type="taxonomic scope" value="Bacteria"/>
</dbReference>
<dbReference type="HOGENOM" id="CLU_033449_0_2_4"/>
<dbReference type="OrthoDB" id="9812273at2"/>
<dbReference type="UniPathway" id="UPA00940"/>
<dbReference type="Proteomes" id="UP000001192">
    <property type="component" value="Chromosome 1"/>
</dbReference>
<dbReference type="GO" id="GO:0005829">
    <property type="term" value="C:cytosol"/>
    <property type="evidence" value="ECO:0007669"/>
    <property type="project" value="TreeGrafter"/>
</dbReference>
<dbReference type="GO" id="GO:0047952">
    <property type="term" value="F:glycerol-3-phosphate dehydrogenase [NAD(P)+] activity"/>
    <property type="evidence" value="ECO:0007669"/>
    <property type="project" value="UniProtKB-UniRule"/>
</dbReference>
<dbReference type="GO" id="GO:0051287">
    <property type="term" value="F:NAD binding"/>
    <property type="evidence" value="ECO:0007669"/>
    <property type="project" value="InterPro"/>
</dbReference>
<dbReference type="GO" id="GO:0005975">
    <property type="term" value="P:carbohydrate metabolic process"/>
    <property type="evidence" value="ECO:0007669"/>
    <property type="project" value="InterPro"/>
</dbReference>
<dbReference type="GO" id="GO:0046167">
    <property type="term" value="P:glycerol-3-phosphate biosynthetic process"/>
    <property type="evidence" value="ECO:0007669"/>
    <property type="project" value="UniProtKB-UniRule"/>
</dbReference>
<dbReference type="GO" id="GO:0046168">
    <property type="term" value="P:glycerol-3-phosphate catabolic process"/>
    <property type="evidence" value="ECO:0007669"/>
    <property type="project" value="InterPro"/>
</dbReference>
<dbReference type="GO" id="GO:0006650">
    <property type="term" value="P:glycerophospholipid metabolic process"/>
    <property type="evidence" value="ECO:0007669"/>
    <property type="project" value="UniProtKB-UniRule"/>
</dbReference>
<dbReference type="GO" id="GO:0008654">
    <property type="term" value="P:phospholipid biosynthetic process"/>
    <property type="evidence" value="ECO:0007669"/>
    <property type="project" value="UniProtKB-KW"/>
</dbReference>
<dbReference type="FunFam" id="1.10.1040.10:FF:000001">
    <property type="entry name" value="Glycerol-3-phosphate dehydrogenase [NAD(P)+]"/>
    <property type="match status" value="1"/>
</dbReference>
<dbReference type="FunFam" id="3.40.50.720:FF:000019">
    <property type="entry name" value="Glycerol-3-phosphate dehydrogenase [NAD(P)+]"/>
    <property type="match status" value="1"/>
</dbReference>
<dbReference type="Gene3D" id="1.10.1040.10">
    <property type="entry name" value="N-(1-d-carboxylethyl)-l-norvaline Dehydrogenase, domain 2"/>
    <property type="match status" value="1"/>
</dbReference>
<dbReference type="Gene3D" id="3.40.50.720">
    <property type="entry name" value="NAD(P)-binding Rossmann-like Domain"/>
    <property type="match status" value="1"/>
</dbReference>
<dbReference type="HAMAP" id="MF_00394">
    <property type="entry name" value="NAD_Glyc3P_dehydrog"/>
    <property type="match status" value="1"/>
</dbReference>
<dbReference type="InterPro" id="IPR008927">
    <property type="entry name" value="6-PGluconate_DH-like_C_sf"/>
</dbReference>
<dbReference type="InterPro" id="IPR013328">
    <property type="entry name" value="6PGD_dom2"/>
</dbReference>
<dbReference type="InterPro" id="IPR006168">
    <property type="entry name" value="G3P_DH_NAD-dep"/>
</dbReference>
<dbReference type="InterPro" id="IPR006109">
    <property type="entry name" value="G3P_DH_NAD-dep_C"/>
</dbReference>
<dbReference type="InterPro" id="IPR011128">
    <property type="entry name" value="G3P_DH_NAD-dep_N"/>
</dbReference>
<dbReference type="InterPro" id="IPR036291">
    <property type="entry name" value="NAD(P)-bd_dom_sf"/>
</dbReference>
<dbReference type="NCBIfam" id="NF000940">
    <property type="entry name" value="PRK00094.1-2"/>
    <property type="match status" value="1"/>
</dbReference>
<dbReference type="NCBIfam" id="NF000942">
    <property type="entry name" value="PRK00094.1-4"/>
    <property type="match status" value="1"/>
</dbReference>
<dbReference type="PANTHER" id="PTHR11728">
    <property type="entry name" value="GLYCEROL-3-PHOSPHATE DEHYDROGENASE"/>
    <property type="match status" value="1"/>
</dbReference>
<dbReference type="PANTHER" id="PTHR11728:SF1">
    <property type="entry name" value="GLYCEROL-3-PHOSPHATE DEHYDROGENASE [NAD(+)] 2, CHLOROPLASTIC"/>
    <property type="match status" value="1"/>
</dbReference>
<dbReference type="Pfam" id="PF07479">
    <property type="entry name" value="NAD_Gly3P_dh_C"/>
    <property type="match status" value="1"/>
</dbReference>
<dbReference type="Pfam" id="PF01210">
    <property type="entry name" value="NAD_Gly3P_dh_N"/>
    <property type="match status" value="1"/>
</dbReference>
<dbReference type="PIRSF" id="PIRSF000114">
    <property type="entry name" value="Glycerol-3-P_dh"/>
    <property type="match status" value="1"/>
</dbReference>
<dbReference type="PRINTS" id="PR00077">
    <property type="entry name" value="GPDHDRGNASE"/>
</dbReference>
<dbReference type="SUPFAM" id="SSF48179">
    <property type="entry name" value="6-phosphogluconate dehydrogenase C-terminal domain-like"/>
    <property type="match status" value="1"/>
</dbReference>
<dbReference type="SUPFAM" id="SSF51735">
    <property type="entry name" value="NAD(P)-binding Rossmann-fold domains"/>
    <property type="match status" value="1"/>
</dbReference>
<dbReference type="PROSITE" id="PS00957">
    <property type="entry name" value="NAD_G3PDH"/>
    <property type="match status" value="1"/>
</dbReference>
<organism>
    <name type="scientific">Paraburkholderia phymatum (strain DSM 17167 / CIP 108236 / LMG 21445 / STM815)</name>
    <name type="common">Burkholderia phymatum</name>
    <dbReference type="NCBI Taxonomy" id="391038"/>
    <lineage>
        <taxon>Bacteria</taxon>
        <taxon>Pseudomonadati</taxon>
        <taxon>Pseudomonadota</taxon>
        <taxon>Betaproteobacteria</taxon>
        <taxon>Burkholderiales</taxon>
        <taxon>Burkholderiaceae</taxon>
        <taxon>Paraburkholderia</taxon>
    </lineage>
</organism>
<protein>
    <recommendedName>
        <fullName evidence="1">Glycerol-3-phosphate dehydrogenase [NAD(P)+]</fullName>
        <ecNumber evidence="1">1.1.1.94</ecNumber>
    </recommendedName>
    <alternativeName>
        <fullName evidence="1">NAD(P)(+)-dependent glycerol-3-phosphate dehydrogenase</fullName>
    </alternativeName>
    <alternativeName>
        <fullName evidence="1">NAD(P)H-dependent dihydroxyacetone-phosphate reductase</fullName>
    </alternativeName>
</protein>
<reference key="1">
    <citation type="journal article" date="2014" name="Stand. Genomic Sci.">
        <title>Complete genome sequence of Burkholderia phymatum STM815(T), a broad host range and efficient nitrogen-fixing symbiont of Mimosa species.</title>
        <authorList>
            <person name="Moulin L."/>
            <person name="Klonowska A."/>
            <person name="Caroline B."/>
            <person name="Booth K."/>
            <person name="Vriezen J.A."/>
            <person name="Melkonian R."/>
            <person name="James E.K."/>
            <person name="Young J.P."/>
            <person name="Bena G."/>
            <person name="Hauser L."/>
            <person name="Land M."/>
            <person name="Kyrpides N."/>
            <person name="Bruce D."/>
            <person name="Chain P."/>
            <person name="Copeland A."/>
            <person name="Pitluck S."/>
            <person name="Woyke T."/>
            <person name="Lizotte-Waniewski M."/>
            <person name="Bristow J."/>
            <person name="Riley M."/>
        </authorList>
    </citation>
    <scope>NUCLEOTIDE SEQUENCE [LARGE SCALE GENOMIC DNA]</scope>
    <source>
        <strain>DSM 17167 / CIP 108236 / LMG 21445 / STM815</strain>
    </source>
</reference>
<gene>
    <name evidence="1" type="primary">gpsA</name>
    <name type="ordered locus">Bphy_0270</name>
</gene>
<feature type="chain" id="PRO_1000123128" description="Glycerol-3-phosphate dehydrogenase [NAD(P)+]">
    <location>
        <begin position="1"/>
        <end position="332"/>
    </location>
</feature>
<feature type="active site" description="Proton acceptor" evidence="1">
    <location>
        <position position="192"/>
    </location>
</feature>
<feature type="binding site" evidence="1">
    <location>
        <position position="11"/>
    </location>
    <ligand>
        <name>NADPH</name>
        <dbReference type="ChEBI" id="CHEBI:57783"/>
    </ligand>
</feature>
<feature type="binding site" evidence="1">
    <location>
        <position position="30"/>
    </location>
    <ligand>
        <name>NADPH</name>
        <dbReference type="ChEBI" id="CHEBI:57783"/>
    </ligand>
</feature>
<feature type="binding site" evidence="1">
    <location>
        <position position="108"/>
    </location>
    <ligand>
        <name>NADPH</name>
        <dbReference type="ChEBI" id="CHEBI:57783"/>
    </ligand>
</feature>
<feature type="binding site" evidence="1">
    <location>
        <position position="108"/>
    </location>
    <ligand>
        <name>sn-glycerol 3-phosphate</name>
        <dbReference type="ChEBI" id="CHEBI:57597"/>
    </ligand>
</feature>
<feature type="binding site" evidence="1">
    <location>
        <position position="137"/>
    </location>
    <ligand>
        <name>sn-glycerol 3-phosphate</name>
        <dbReference type="ChEBI" id="CHEBI:57597"/>
    </ligand>
</feature>
<feature type="binding site" evidence="1">
    <location>
        <position position="139"/>
    </location>
    <ligand>
        <name>sn-glycerol 3-phosphate</name>
        <dbReference type="ChEBI" id="CHEBI:57597"/>
    </ligand>
</feature>
<feature type="binding site" evidence="1">
    <location>
        <position position="141"/>
    </location>
    <ligand>
        <name>NADPH</name>
        <dbReference type="ChEBI" id="CHEBI:57783"/>
    </ligand>
</feature>
<feature type="binding site" evidence="1">
    <location>
        <position position="192"/>
    </location>
    <ligand>
        <name>sn-glycerol 3-phosphate</name>
        <dbReference type="ChEBI" id="CHEBI:57597"/>
    </ligand>
</feature>
<feature type="binding site" evidence="1">
    <location>
        <position position="245"/>
    </location>
    <ligand>
        <name>sn-glycerol 3-phosphate</name>
        <dbReference type="ChEBI" id="CHEBI:57597"/>
    </ligand>
</feature>
<feature type="binding site" evidence="1">
    <location>
        <position position="255"/>
    </location>
    <ligand>
        <name>sn-glycerol 3-phosphate</name>
        <dbReference type="ChEBI" id="CHEBI:57597"/>
    </ligand>
</feature>
<feature type="binding site" evidence="1">
    <location>
        <position position="256"/>
    </location>
    <ligand>
        <name>NADPH</name>
        <dbReference type="ChEBI" id="CHEBI:57783"/>
    </ligand>
</feature>
<feature type="binding site" evidence="1">
    <location>
        <position position="256"/>
    </location>
    <ligand>
        <name>sn-glycerol 3-phosphate</name>
        <dbReference type="ChEBI" id="CHEBI:57597"/>
    </ligand>
</feature>
<feature type="binding site" evidence="1">
    <location>
        <position position="257"/>
    </location>
    <ligand>
        <name>sn-glycerol 3-phosphate</name>
        <dbReference type="ChEBI" id="CHEBI:57597"/>
    </ligand>
</feature>
<feature type="binding site" evidence="1">
    <location>
        <position position="280"/>
    </location>
    <ligand>
        <name>NADPH</name>
        <dbReference type="ChEBI" id="CHEBI:57783"/>
    </ligand>
</feature>
<feature type="binding site" evidence="1">
    <location>
        <position position="282"/>
    </location>
    <ligand>
        <name>NADPH</name>
        <dbReference type="ChEBI" id="CHEBI:57783"/>
    </ligand>
</feature>